<proteinExistence type="inferred from homology"/>
<keyword id="KW-0997">Cell inner membrane</keyword>
<keyword id="KW-1003">Cell membrane</keyword>
<keyword id="KW-0472">Membrane</keyword>
<keyword id="KW-0520">NAD</keyword>
<keyword id="KW-0874">Quinone</keyword>
<keyword id="KW-1278">Translocase</keyword>
<keyword id="KW-0812">Transmembrane</keyword>
<keyword id="KW-1133">Transmembrane helix</keyword>
<keyword id="KW-0813">Transport</keyword>
<keyword id="KW-0830">Ubiquinone</keyword>
<reference key="1">
    <citation type="journal article" date="2006" name="J. Bacteriol.">
        <title>Complete genome sequence of Yersinia pestis strains Antiqua and Nepal516: evidence of gene reduction in an emerging pathogen.</title>
        <authorList>
            <person name="Chain P.S.G."/>
            <person name="Hu P."/>
            <person name="Malfatti S.A."/>
            <person name="Radnedge L."/>
            <person name="Larimer F."/>
            <person name="Vergez L.M."/>
            <person name="Worsham P."/>
            <person name="Chu M.C."/>
            <person name="Andersen G.L."/>
        </authorList>
    </citation>
    <scope>NUCLEOTIDE SEQUENCE [LARGE SCALE GENOMIC DNA]</scope>
    <source>
        <strain>Antiqua</strain>
    </source>
</reference>
<dbReference type="EC" id="7.1.1.-" evidence="1"/>
<dbReference type="EMBL" id="CP000308">
    <property type="protein sequence ID" value="ABG14004.1"/>
    <property type="molecule type" value="Genomic_DNA"/>
</dbReference>
<dbReference type="RefSeq" id="WP_002210271.1">
    <property type="nucleotide sequence ID" value="NZ_CP009906.1"/>
</dbReference>
<dbReference type="SMR" id="Q1C6B8"/>
<dbReference type="GeneID" id="96666077"/>
<dbReference type="KEGG" id="ypa:YPA_2038"/>
<dbReference type="Proteomes" id="UP000001971">
    <property type="component" value="Chromosome"/>
</dbReference>
<dbReference type="GO" id="GO:0030964">
    <property type="term" value="C:NADH dehydrogenase complex"/>
    <property type="evidence" value="ECO:0007669"/>
    <property type="project" value="TreeGrafter"/>
</dbReference>
<dbReference type="GO" id="GO:0005886">
    <property type="term" value="C:plasma membrane"/>
    <property type="evidence" value="ECO:0007669"/>
    <property type="project" value="UniProtKB-SubCell"/>
</dbReference>
<dbReference type="GO" id="GO:0050136">
    <property type="term" value="F:NADH:ubiquinone reductase (non-electrogenic) activity"/>
    <property type="evidence" value="ECO:0007669"/>
    <property type="project" value="UniProtKB-UniRule"/>
</dbReference>
<dbReference type="GO" id="GO:0048038">
    <property type="term" value="F:quinone binding"/>
    <property type="evidence" value="ECO:0007669"/>
    <property type="project" value="UniProtKB-KW"/>
</dbReference>
<dbReference type="GO" id="GO:0042773">
    <property type="term" value="P:ATP synthesis coupled electron transport"/>
    <property type="evidence" value="ECO:0007669"/>
    <property type="project" value="InterPro"/>
</dbReference>
<dbReference type="FunFam" id="1.10.287.3510:FF:000001">
    <property type="entry name" value="NADH-quinone oxidoreductase subunit K"/>
    <property type="match status" value="1"/>
</dbReference>
<dbReference type="Gene3D" id="1.10.287.3510">
    <property type="match status" value="1"/>
</dbReference>
<dbReference type="HAMAP" id="MF_01456">
    <property type="entry name" value="NDH1_NuoK"/>
    <property type="match status" value="1"/>
</dbReference>
<dbReference type="InterPro" id="IPR001133">
    <property type="entry name" value="NADH_UbQ_OxRdtase_chain4L/K"/>
</dbReference>
<dbReference type="InterPro" id="IPR039428">
    <property type="entry name" value="NUOK/Mnh_C1-like"/>
</dbReference>
<dbReference type="NCBIfam" id="NF004319">
    <property type="entry name" value="PRK05715.1-1"/>
    <property type="match status" value="1"/>
</dbReference>
<dbReference type="NCBIfam" id="NF004320">
    <property type="entry name" value="PRK05715.1-2"/>
    <property type="match status" value="1"/>
</dbReference>
<dbReference type="PANTHER" id="PTHR11434:SF16">
    <property type="entry name" value="NADH-UBIQUINONE OXIDOREDUCTASE CHAIN 4L"/>
    <property type="match status" value="1"/>
</dbReference>
<dbReference type="PANTHER" id="PTHR11434">
    <property type="entry name" value="NADH-UBIQUINONE OXIDOREDUCTASE SUBUNIT ND4L"/>
    <property type="match status" value="1"/>
</dbReference>
<dbReference type="Pfam" id="PF00420">
    <property type="entry name" value="Oxidored_q2"/>
    <property type="match status" value="1"/>
</dbReference>
<feature type="chain" id="PRO_0000390286" description="NADH-quinone oxidoreductase subunit K">
    <location>
        <begin position="1"/>
        <end position="100"/>
    </location>
</feature>
<feature type="transmembrane region" description="Helical" evidence="1">
    <location>
        <begin position="4"/>
        <end position="24"/>
    </location>
</feature>
<feature type="transmembrane region" description="Helical" evidence="1">
    <location>
        <begin position="28"/>
        <end position="48"/>
    </location>
</feature>
<feature type="transmembrane region" description="Helical" evidence="1">
    <location>
        <begin position="60"/>
        <end position="80"/>
    </location>
</feature>
<name>NUOK_YERPA</name>
<protein>
    <recommendedName>
        <fullName evidence="1">NADH-quinone oxidoreductase subunit K</fullName>
        <ecNumber evidence="1">7.1.1.-</ecNumber>
    </recommendedName>
    <alternativeName>
        <fullName evidence="1">NADH dehydrogenase I subunit K</fullName>
    </alternativeName>
    <alternativeName>
        <fullName evidence="1">NDH-1 subunit K</fullName>
    </alternativeName>
</protein>
<organism>
    <name type="scientific">Yersinia pestis bv. Antiqua (strain Antiqua)</name>
    <dbReference type="NCBI Taxonomy" id="360102"/>
    <lineage>
        <taxon>Bacteria</taxon>
        <taxon>Pseudomonadati</taxon>
        <taxon>Pseudomonadota</taxon>
        <taxon>Gammaproteobacteria</taxon>
        <taxon>Enterobacterales</taxon>
        <taxon>Yersiniaceae</taxon>
        <taxon>Yersinia</taxon>
    </lineage>
</organism>
<comment type="function">
    <text evidence="1">NDH-1 shuttles electrons from NADH, via FMN and iron-sulfur (Fe-S) centers, to quinones in the respiratory chain. The immediate electron acceptor for the enzyme in this species is believed to be ubiquinone. Couples the redox reaction to proton translocation (for every two electrons transferred, four hydrogen ions are translocated across the cytoplasmic membrane), and thus conserves the redox energy in a proton gradient.</text>
</comment>
<comment type="catalytic activity">
    <reaction evidence="1">
        <text>a quinone + NADH + 5 H(+)(in) = a quinol + NAD(+) + 4 H(+)(out)</text>
        <dbReference type="Rhea" id="RHEA:57888"/>
        <dbReference type="ChEBI" id="CHEBI:15378"/>
        <dbReference type="ChEBI" id="CHEBI:24646"/>
        <dbReference type="ChEBI" id="CHEBI:57540"/>
        <dbReference type="ChEBI" id="CHEBI:57945"/>
        <dbReference type="ChEBI" id="CHEBI:132124"/>
    </reaction>
</comment>
<comment type="subunit">
    <text evidence="1">NDH-1 is composed of 13 different subunits. Subunits NuoA, H, J, K, L, M, N constitute the membrane sector of the complex.</text>
</comment>
<comment type="subcellular location">
    <subcellularLocation>
        <location evidence="1">Cell inner membrane</location>
        <topology evidence="1">Multi-pass membrane protein</topology>
    </subcellularLocation>
</comment>
<comment type="similarity">
    <text evidence="1">Belongs to the complex I subunit 4L family.</text>
</comment>
<gene>
    <name evidence="1" type="primary">nuoK</name>
    <name type="ordered locus">YPA_2038</name>
</gene>
<accession>Q1C6B8</accession>
<sequence length="100" mass="10880">MIPLQHGLILAAILFVLGLTGLLIRRNLLFMLISLEVMINAAALAFVVAGSYWGQADGQVMYILAITLAAAEASIGLALLLQLYRRRHTLDIDTVSEMRG</sequence>
<evidence type="ECO:0000255" key="1">
    <source>
        <dbReference type="HAMAP-Rule" id="MF_01456"/>
    </source>
</evidence>